<name>ROMO1_HUMAN</name>
<accession>P60602</accession>
<accession>A7M872</accession>
<accession>E1P5R9</accession>
<accession>E9KL28</accession>
<accession>Q3MHD5</accession>
<accession>Q5QP16</accession>
<accession>Q9CQ98</accession>
<accession>Q9H1N2</accession>
<reference key="1">
    <citation type="journal article" date="2009" name="J. Cell Sci.">
        <title>The novel conserved mitochondrial inner-membrane protein MTGM regulates mitochondrial morphology and cell proliferation.</title>
        <authorList>
            <person name="Zhao J."/>
            <person name="Liu T."/>
            <person name="Jin S.B."/>
            <person name="Tomilin N."/>
            <person name="Castro J."/>
            <person name="Shupliakov O."/>
            <person name="Lendahl U."/>
            <person name="Nister M."/>
        </authorList>
    </citation>
    <scope>NUCLEOTIDE SEQUENCE [MRNA] (ISOFORM 1)</scope>
    <scope>FUNCTION</scope>
    <scope>TISSUE SPECIFICITY</scope>
    <scope>SUBCELLULAR LOCATION</scope>
    <source>
        <tissue>Brain</tissue>
    </source>
</reference>
<reference key="2">
    <citation type="journal article" date="2010" name="Mol. Cell. Proteomics">
        <title>Systematic mapping and functional analysis of a family of human epididymal secretory sperm-located proteins.</title>
        <authorList>
            <person name="Li J."/>
            <person name="Liu F."/>
            <person name="Wang H."/>
            <person name="Liu X."/>
            <person name="Liu J."/>
            <person name="Li N."/>
            <person name="Wan F."/>
            <person name="Wang W."/>
            <person name="Zhang C."/>
            <person name="Jin S."/>
            <person name="Liu J."/>
            <person name="Zhu P."/>
            <person name="Liu Y."/>
        </authorList>
    </citation>
    <scope>NUCLEOTIDE SEQUENCE [LARGE SCALE MRNA]</scope>
    <source>
        <tissue>Epididymis</tissue>
    </source>
</reference>
<reference key="3">
    <citation type="journal article" date="2001" name="Nature">
        <title>The DNA sequence and comparative analysis of human chromosome 20.</title>
        <authorList>
            <person name="Deloukas P."/>
            <person name="Matthews L.H."/>
            <person name="Ashurst J.L."/>
            <person name="Burton J."/>
            <person name="Gilbert J.G.R."/>
            <person name="Jones M."/>
            <person name="Stavrides G."/>
            <person name="Almeida J.P."/>
            <person name="Babbage A.K."/>
            <person name="Bagguley C.L."/>
            <person name="Bailey J."/>
            <person name="Barlow K.F."/>
            <person name="Bates K.N."/>
            <person name="Beard L.M."/>
            <person name="Beare D.M."/>
            <person name="Beasley O.P."/>
            <person name="Bird C.P."/>
            <person name="Blakey S.E."/>
            <person name="Bridgeman A.M."/>
            <person name="Brown A.J."/>
            <person name="Buck D."/>
            <person name="Burrill W.D."/>
            <person name="Butler A.P."/>
            <person name="Carder C."/>
            <person name="Carter N.P."/>
            <person name="Chapman J.C."/>
            <person name="Clamp M."/>
            <person name="Clark G."/>
            <person name="Clark L.N."/>
            <person name="Clark S.Y."/>
            <person name="Clee C.M."/>
            <person name="Clegg S."/>
            <person name="Cobley V.E."/>
            <person name="Collier R.E."/>
            <person name="Connor R.E."/>
            <person name="Corby N.R."/>
            <person name="Coulson A."/>
            <person name="Coville G.J."/>
            <person name="Deadman R."/>
            <person name="Dhami P.D."/>
            <person name="Dunn M."/>
            <person name="Ellington A.G."/>
            <person name="Frankland J.A."/>
            <person name="Fraser A."/>
            <person name="French L."/>
            <person name="Garner P."/>
            <person name="Grafham D.V."/>
            <person name="Griffiths C."/>
            <person name="Griffiths M.N.D."/>
            <person name="Gwilliam R."/>
            <person name="Hall R.E."/>
            <person name="Hammond S."/>
            <person name="Harley J.L."/>
            <person name="Heath P.D."/>
            <person name="Ho S."/>
            <person name="Holden J.L."/>
            <person name="Howden P.J."/>
            <person name="Huckle E."/>
            <person name="Hunt A.R."/>
            <person name="Hunt S.E."/>
            <person name="Jekosch K."/>
            <person name="Johnson C.M."/>
            <person name="Johnson D."/>
            <person name="Kay M.P."/>
            <person name="Kimberley A.M."/>
            <person name="King A."/>
            <person name="Knights A."/>
            <person name="Laird G.K."/>
            <person name="Lawlor S."/>
            <person name="Lehvaeslaiho M.H."/>
            <person name="Leversha M.A."/>
            <person name="Lloyd C."/>
            <person name="Lloyd D.M."/>
            <person name="Lovell J.D."/>
            <person name="Marsh V.L."/>
            <person name="Martin S.L."/>
            <person name="McConnachie L.J."/>
            <person name="McLay K."/>
            <person name="McMurray A.A."/>
            <person name="Milne S.A."/>
            <person name="Mistry D."/>
            <person name="Moore M.J.F."/>
            <person name="Mullikin J.C."/>
            <person name="Nickerson T."/>
            <person name="Oliver K."/>
            <person name="Parker A."/>
            <person name="Patel R."/>
            <person name="Pearce T.A.V."/>
            <person name="Peck A.I."/>
            <person name="Phillimore B.J.C.T."/>
            <person name="Prathalingam S.R."/>
            <person name="Plumb R.W."/>
            <person name="Ramsay H."/>
            <person name="Rice C.M."/>
            <person name="Ross M.T."/>
            <person name="Scott C.E."/>
            <person name="Sehra H.K."/>
            <person name="Shownkeen R."/>
            <person name="Sims S."/>
            <person name="Skuce C.D."/>
            <person name="Smith M.L."/>
            <person name="Soderlund C."/>
            <person name="Steward C.A."/>
            <person name="Sulston J.E."/>
            <person name="Swann R.M."/>
            <person name="Sycamore N."/>
            <person name="Taylor R."/>
            <person name="Tee L."/>
            <person name="Thomas D.W."/>
            <person name="Thorpe A."/>
            <person name="Tracey A."/>
            <person name="Tromans A.C."/>
            <person name="Vaudin M."/>
            <person name="Wall M."/>
            <person name="Wallis J.M."/>
            <person name="Whitehead S.L."/>
            <person name="Whittaker P."/>
            <person name="Willey D.L."/>
            <person name="Williams L."/>
            <person name="Williams S.A."/>
            <person name="Wilming L."/>
            <person name="Wray P.W."/>
            <person name="Hubbard T."/>
            <person name="Durbin R.M."/>
            <person name="Bentley D.R."/>
            <person name="Beck S."/>
            <person name="Rogers J."/>
        </authorList>
    </citation>
    <scope>NUCLEOTIDE SEQUENCE [LARGE SCALE GENOMIC DNA]</scope>
</reference>
<reference key="4">
    <citation type="submission" date="2005-09" db="EMBL/GenBank/DDBJ databases">
        <authorList>
            <person name="Mural R.J."/>
            <person name="Istrail S."/>
            <person name="Sutton G.G."/>
            <person name="Florea L."/>
            <person name="Halpern A.L."/>
            <person name="Mobarry C.M."/>
            <person name="Lippert R."/>
            <person name="Walenz B."/>
            <person name="Shatkay H."/>
            <person name="Dew I."/>
            <person name="Miller J.R."/>
            <person name="Flanigan M.J."/>
            <person name="Edwards N.J."/>
            <person name="Bolanos R."/>
            <person name="Fasulo D."/>
            <person name="Halldorsson B.V."/>
            <person name="Hannenhalli S."/>
            <person name="Turner R."/>
            <person name="Yooseph S."/>
            <person name="Lu F."/>
            <person name="Nusskern D.R."/>
            <person name="Shue B.C."/>
            <person name="Zheng X.H."/>
            <person name="Zhong F."/>
            <person name="Delcher A.L."/>
            <person name="Huson D.H."/>
            <person name="Kravitz S.A."/>
            <person name="Mouchard L."/>
            <person name="Reinert K."/>
            <person name="Remington K.A."/>
            <person name="Clark A.G."/>
            <person name="Waterman M.S."/>
            <person name="Eichler E.E."/>
            <person name="Adams M.D."/>
            <person name="Hunkapiller M.W."/>
            <person name="Myers E.W."/>
            <person name="Venter J.C."/>
        </authorList>
    </citation>
    <scope>NUCLEOTIDE SEQUENCE [LARGE SCALE GENOMIC DNA]</scope>
</reference>
<reference key="5">
    <citation type="journal article" date="2004" name="Genome Res.">
        <title>The status, quality, and expansion of the NIH full-length cDNA project: the Mammalian Gene Collection (MGC).</title>
        <authorList>
            <consortium name="The MGC Project Team"/>
        </authorList>
    </citation>
    <scope>NUCLEOTIDE SEQUENCE [LARGE SCALE MRNA] (ISOFORM 1)</scope>
    <source>
        <tissue>Bone marrow</tissue>
    </source>
</reference>
<reference key="6">
    <citation type="journal article" date="2006" name="Biochem. Biophys. Res. Commun.">
        <title>A novel protein, Romo1, induces ROS production in the mitochondria.</title>
        <authorList>
            <person name="Chung Y.M."/>
            <person name="Kim J.S."/>
            <person name="Yoo Y.D."/>
        </authorList>
    </citation>
    <scope>FUNCTION</scope>
    <scope>SUBCELLULAR LOCATION</scope>
    <scope>TISSUE SPECIFICITY</scope>
</reference>
<reference key="7">
    <citation type="journal article" date="2007" name="Biochem. Biophys. Res. Commun.">
        <title>Drug resistance to 5-FU linked to reactive oxygen species modulator 1.</title>
        <authorList>
            <person name="Hwang I.T."/>
            <person name="Chung Y.M."/>
            <person name="Kim J.J."/>
            <person name="Chung J.S."/>
            <person name="Kim B.S."/>
            <person name="Kim H.J."/>
            <person name="Kim J.S."/>
            <person name="Yoo Y.D."/>
        </authorList>
    </citation>
    <scope>FUNCTION</scope>
    <scope>INDUCTION</scope>
</reference>
<reference key="8">
    <citation type="journal article" date="2008" name="Biochem. Biophys. Res. Commun.">
        <title>A critical role for Romo1-derived ROS in cell proliferation.</title>
        <authorList>
            <person name="Na A.R."/>
            <person name="Chung Y.M."/>
            <person name="Lee S.B."/>
            <person name="Park S.H."/>
            <person name="Lee M.-S."/>
            <person name="Yoo Y.D."/>
        </authorList>
    </citation>
    <scope>FUNCTION</scope>
</reference>
<reference key="9">
    <citation type="journal article" date="2008" name="J. Biol. Chem.">
        <title>Replicative senescence induced by Romo1-derived reactive oxygen species.</title>
        <authorList>
            <person name="Chung Y.M."/>
            <person name="Lee S.B."/>
            <person name="Kim H.J."/>
            <person name="Park S.H."/>
            <person name="Kim J.J."/>
            <person name="Chung J.S."/>
            <person name="Yoo Y.D."/>
        </authorList>
    </citation>
    <scope>FUNCTION</scope>
    <scope>DEVELOPMENTAL STAGE</scope>
</reference>
<reference key="10">
    <citation type="journal article" date="2011" name="BMC Syst. Biol.">
        <title>Initial characterization of the human central proteome.</title>
        <authorList>
            <person name="Burkard T.R."/>
            <person name="Planyavsky M."/>
            <person name="Kaupe I."/>
            <person name="Breitwieser F.P."/>
            <person name="Buerckstuemmer T."/>
            <person name="Bennett K.L."/>
            <person name="Superti-Furga G."/>
            <person name="Colinge J."/>
        </authorList>
    </citation>
    <scope>IDENTIFICATION BY MASS SPECTROMETRY [LARGE SCALE ANALYSIS]</scope>
</reference>
<reference key="11">
    <citation type="journal article" date="2012" name="J. Pept. Sci.">
        <title>Antibacterial potential of hGlyrichin encoded by a human gene.</title>
        <authorList>
            <person name="Sha J."/>
            <person name="Zhao G."/>
            <person name="Chen X."/>
            <person name="Guan W."/>
            <person name="He Y."/>
            <person name="Wang Z."/>
        </authorList>
    </citation>
    <scope>ANTIBACTERIAL FUNCTION</scope>
</reference>
<reference key="12">
    <citation type="journal article" date="2012" name="Proc. Natl. Acad. Sci. U.S.A.">
        <title>N-terminal acetylome analyses and functional insights of the N-terminal acetyltransferase NatB.</title>
        <authorList>
            <person name="Van Damme P."/>
            <person name="Lasa M."/>
            <person name="Polevoda B."/>
            <person name="Gazquez C."/>
            <person name="Elosegui-Artola A."/>
            <person name="Kim D.S."/>
            <person name="De Juan-Pardo E."/>
            <person name="Demeyer K."/>
            <person name="Hole K."/>
            <person name="Larrea E."/>
            <person name="Timmerman E."/>
            <person name="Prieto J."/>
            <person name="Arnesen T."/>
            <person name="Sherman F."/>
            <person name="Gevaert K."/>
            <person name="Aldabe R."/>
        </authorList>
    </citation>
    <scope>IDENTIFICATION BY MASS SPECTROMETRY [LARGE SCALE ANALYSIS]</scope>
</reference>
<reference key="13">
    <citation type="journal article" date="2015" name="Proteomics">
        <title>N-terminome analysis of the human mitochondrial proteome.</title>
        <authorList>
            <person name="Vaca Jacome A.S."/>
            <person name="Rabilloud T."/>
            <person name="Schaeffer-Reiss C."/>
            <person name="Rompais M."/>
            <person name="Ayoub D."/>
            <person name="Lane L."/>
            <person name="Bairoch A."/>
            <person name="Van Dorsselaer A."/>
            <person name="Carapito C."/>
        </authorList>
    </citation>
    <scope>CLEAVAGE OF INITIATOR METHIONINE [LARGE SCALE ANALYSIS]</scope>
    <scope>IDENTIFICATION BY MASS SPECTROMETRY [LARGE SCALE ANALYSIS]</scope>
</reference>
<dbReference type="EMBL" id="AM397244">
    <property type="protein sequence ID" value="CAL37002.1"/>
    <property type="molecule type" value="mRNA"/>
</dbReference>
<dbReference type="EMBL" id="AM397245">
    <property type="protein sequence ID" value="CAL37003.1"/>
    <property type="molecule type" value="mRNA"/>
</dbReference>
<dbReference type="EMBL" id="AM397246">
    <property type="protein sequence ID" value="CAL37004.1"/>
    <property type="molecule type" value="mRNA"/>
</dbReference>
<dbReference type="EMBL" id="GU727625">
    <property type="protein sequence ID" value="ADU87627.1"/>
    <property type="molecule type" value="mRNA"/>
</dbReference>
<dbReference type="EMBL" id="AL357374">
    <property type="status" value="NOT_ANNOTATED_CDS"/>
    <property type="molecule type" value="Genomic_DNA"/>
</dbReference>
<dbReference type="EMBL" id="CH471077">
    <property type="protein sequence ID" value="EAW76168.1"/>
    <property type="molecule type" value="Genomic_DNA"/>
</dbReference>
<dbReference type="EMBL" id="CH471077">
    <property type="protein sequence ID" value="EAW76169.1"/>
    <property type="molecule type" value="Genomic_DNA"/>
</dbReference>
<dbReference type="EMBL" id="BC008488">
    <property type="protein sequence ID" value="AAH08488.1"/>
    <property type="molecule type" value="mRNA"/>
</dbReference>
<dbReference type="EMBL" id="BC105281">
    <property type="protein sequence ID" value="AAI05282.1"/>
    <property type="molecule type" value="mRNA"/>
</dbReference>
<dbReference type="CCDS" id="CCDS13264.1">
    <molecule id="P60602-1"/>
</dbReference>
<dbReference type="RefSeq" id="NP_542786.1">
    <molecule id="P60602-1"/>
    <property type="nucleotide sequence ID" value="NM_080748.3"/>
</dbReference>
<dbReference type="RefSeq" id="XP_016883167.1">
    <molecule id="P60602-1"/>
    <property type="nucleotide sequence ID" value="XM_017027678.2"/>
</dbReference>
<dbReference type="RefSeq" id="XP_054178997.1">
    <molecule id="P60602-1"/>
    <property type="nucleotide sequence ID" value="XM_054323022.1"/>
</dbReference>
<dbReference type="SMR" id="P60602"/>
<dbReference type="BioGRID" id="126718">
    <property type="interactions" value="31"/>
</dbReference>
<dbReference type="ComplexPortal" id="CPX-6129">
    <property type="entry name" value="TIM23 mitochondrial inner membrane pre-sequence translocase complex, TIM17A variant"/>
</dbReference>
<dbReference type="ComplexPortal" id="CPX-6130">
    <property type="entry name" value="TIM23 mitochondrial inner membrane pre-sequence translocase complex, TIM17B variant"/>
</dbReference>
<dbReference type="CORUM" id="P60602"/>
<dbReference type="FunCoup" id="P60602">
    <property type="interactions" value="981"/>
</dbReference>
<dbReference type="IntAct" id="P60602">
    <property type="interactions" value="6"/>
</dbReference>
<dbReference type="MINT" id="P60602"/>
<dbReference type="STRING" id="9606.ENSP00000363191"/>
<dbReference type="TCDB" id="1.A.111.1.1">
    <property type="family name" value="the reactive oxygen species modulator 1 (romo1) family"/>
</dbReference>
<dbReference type="GlyGen" id="P60602">
    <property type="glycosylation" value="1 site, 1 O-linked glycan (1 site)"/>
</dbReference>
<dbReference type="iPTMnet" id="P60602"/>
<dbReference type="PhosphoSitePlus" id="P60602"/>
<dbReference type="SwissPalm" id="P60602"/>
<dbReference type="BioMuta" id="ROMO1"/>
<dbReference type="DMDM" id="45593159"/>
<dbReference type="jPOST" id="P60602"/>
<dbReference type="MassIVE" id="P60602"/>
<dbReference type="PaxDb" id="9606-ENSP00000363191"/>
<dbReference type="PeptideAtlas" id="P60602"/>
<dbReference type="ProteomicsDB" id="57216">
    <molecule id="P60602-1"/>
</dbReference>
<dbReference type="ProteomicsDB" id="57217">
    <molecule id="P60602-2"/>
</dbReference>
<dbReference type="Pumba" id="P60602"/>
<dbReference type="TopDownProteomics" id="P60602-1">
    <molecule id="P60602-1"/>
</dbReference>
<dbReference type="Antibodypedia" id="2412">
    <property type="antibodies" value="153 antibodies from 18 providers"/>
</dbReference>
<dbReference type="DNASU" id="140823"/>
<dbReference type="Ensembl" id="ENST00000336695.4">
    <molecule id="P60602-1"/>
    <property type="protein sequence ID" value="ENSP00000338293.4"/>
    <property type="gene ID" value="ENSG00000125995.16"/>
</dbReference>
<dbReference type="Ensembl" id="ENST00000374072.5">
    <molecule id="P60602-2"/>
    <property type="protein sequence ID" value="ENSP00000363185.1"/>
    <property type="gene ID" value="ENSG00000125995.16"/>
</dbReference>
<dbReference type="Ensembl" id="ENST00000374077.8">
    <molecule id="P60602-1"/>
    <property type="protein sequence ID" value="ENSP00000363190.3"/>
    <property type="gene ID" value="ENSG00000125995.16"/>
</dbReference>
<dbReference type="Ensembl" id="ENST00000374078.5">
    <molecule id="P60602-1"/>
    <property type="protein sequence ID" value="ENSP00000363191.1"/>
    <property type="gene ID" value="ENSG00000125995.16"/>
</dbReference>
<dbReference type="Ensembl" id="ENST00000397416.1">
    <molecule id="P60602-1"/>
    <property type="protein sequence ID" value="ENSP00000380561.1"/>
    <property type="gene ID" value="ENSG00000125995.16"/>
</dbReference>
<dbReference type="GeneID" id="140823"/>
<dbReference type="KEGG" id="hsa:140823"/>
<dbReference type="MANE-Select" id="ENST00000374077.8">
    <property type="protein sequence ID" value="ENSP00000363190.3"/>
    <property type="RefSeq nucleotide sequence ID" value="NM_080748.3"/>
    <property type="RefSeq protein sequence ID" value="NP_542786.1"/>
</dbReference>
<dbReference type="UCSC" id="uc002xdy.4">
    <molecule id="P60602-1"/>
    <property type="organism name" value="human"/>
</dbReference>
<dbReference type="AGR" id="HGNC:16185"/>
<dbReference type="CTD" id="140823"/>
<dbReference type="DisGeNET" id="140823"/>
<dbReference type="GeneCards" id="ROMO1"/>
<dbReference type="HGNC" id="HGNC:16185">
    <property type="gene designation" value="ROMO1"/>
</dbReference>
<dbReference type="HPA" id="ENSG00000125995">
    <property type="expression patterns" value="Low tissue specificity"/>
</dbReference>
<dbReference type="MIM" id="618894">
    <property type="type" value="gene"/>
</dbReference>
<dbReference type="neXtProt" id="NX_P60602"/>
<dbReference type="OpenTargets" id="ENSG00000125995"/>
<dbReference type="PharmGKB" id="PA164725540"/>
<dbReference type="VEuPathDB" id="HostDB:ENSG00000125995"/>
<dbReference type="eggNOG" id="KOG4096">
    <property type="taxonomic scope" value="Eukaryota"/>
</dbReference>
<dbReference type="GeneTree" id="ENSGT00390000005315"/>
<dbReference type="HOGENOM" id="CLU_142435_2_0_1"/>
<dbReference type="InParanoid" id="P60602"/>
<dbReference type="OMA" id="SCWDRVK"/>
<dbReference type="OrthoDB" id="5409308at2759"/>
<dbReference type="PAN-GO" id="P60602">
    <property type="GO annotations" value="3 GO annotations based on evolutionary models"/>
</dbReference>
<dbReference type="PhylomeDB" id="P60602"/>
<dbReference type="TreeFam" id="TF300273"/>
<dbReference type="PathwayCommons" id="P60602"/>
<dbReference type="SignaLink" id="P60602"/>
<dbReference type="SIGNOR" id="P60602"/>
<dbReference type="BioGRID-ORCS" id="140823">
    <property type="hits" value="513 hits in 1167 CRISPR screens"/>
</dbReference>
<dbReference type="ChiTaRS" id="ROMO1">
    <property type="organism name" value="human"/>
</dbReference>
<dbReference type="GenomeRNAi" id="140823"/>
<dbReference type="Pharos" id="P60602">
    <property type="development level" value="Tbio"/>
</dbReference>
<dbReference type="PRO" id="PR:P60602"/>
<dbReference type="Proteomes" id="UP000005640">
    <property type="component" value="Chromosome 20"/>
</dbReference>
<dbReference type="RNAct" id="P60602">
    <property type="molecule type" value="protein"/>
</dbReference>
<dbReference type="Bgee" id="ENSG00000125995">
    <property type="expression patterns" value="Expressed in apex of heart and 183 other cell types or tissues"/>
</dbReference>
<dbReference type="GO" id="GO:0005743">
    <property type="term" value="C:mitochondrial inner membrane"/>
    <property type="evidence" value="ECO:0000314"/>
    <property type="project" value="FlyBase"/>
</dbReference>
<dbReference type="GO" id="GO:0005739">
    <property type="term" value="C:mitochondrion"/>
    <property type="evidence" value="ECO:0000314"/>
    <property type="project" value="UniProtKB"/>
</dbReference>
<dbReference type="GO" id="GO:0005744">
    <property type="term" value="C:TIM23 mitochondrial import inner membrane translocase complex"/>
    <property type="evidence" value="ECO:0000314"/>
    <property type="project" value="FlyBase"/>
</dbReference>
<dbReference type="GO" id="GO:0008324">
    <property type="term" value="F:monoatomic cation transmembrane transporter activity"/>
    <property type="evidence" value="ECO:0000314"/>
    <property type="project" value="FlyBase"/>
</dbReference>
<dbReference type="GO" id="GO:0061844">
    <property type="term" value="P:antimicrobial humoral immune response mediated by antimicrobial peptide"/>
    <property type="evidence" value="ECO:0000315"/>
    <property type="project" value="UniProtKB"/>
</dbReference>
<dbReference type="GO" id="GO:0034614">
    <property type="term" value="P:cellular response to reactive oxygen species"/>
    <property type="evidence" value="ECO:0000315"/>
    <property type="project" value="UniProtKB"/>
</dbReference>
<dbReference type="GO" id="GO:0051838">
    <property type="term" value="P:cytolysis by host of symbiont cells"/>
    <property type="evidence" value="ECO:0000314"/>
    <property type="project" value="UniProtKB"/>
</dbReference>
<dbReference type="GO" id="GO:0042742">
    <property type="term" value="P:defense response to bacterium"/>
    <property type="evidence" value="ECO:0000314"/>
    <property type="project" value="UniProtKB"/>
</dbReference>
<dbReference type="GO" id="GO:0050829">
    <property type="term" value="P:defense response to Gram-negative bacterium"/>
    <property type="evidence" value="ECO:0000314"/>
    <property type="project" value="UniProtKB"/>
</dbReference>
<dbReference type="GO" id="GO:0050830">
    <property type="term" value="P:defense response to Gram-positive bacterium"/>
    <property type="evidence" value="ECO:0000314"/>
    <property type="project" value="UniProtKB"/>
</dbReference>
<dbReference type="GO" id="GO:0006886">
    <property type="term" value="P:intracellular protein transport"/>
    <property type="evidence" value="ECO:0000303"/>
    <property type="project" value="ComplexPortal"/>
</dbReference>
<dbReference type="GO" id="GO:0031640">
    <property type="term" value="P:killing of cells of another organism"/>
    <property type="evidence" value="ECO:0000314"/>
    <property type="project" value="UniProtKB"/>
</dbReference>
<dbReference type="GO" id="GO:0098655">
    <property type="term" value="P:monoatomic cation transmembrane transport"/>
    <property type="evidence" value="ECO:0000314"/>
    <property type="project" value="FlyBase"/>
</dbReference>
<dbReference type="GO" id="GO:2000379">
    <property type="term" value="P:positive regulation of reactive oxygen species metabolic process"/>
    <property type="evidence" value="ECO:0000314"/>
    <property type="project" value="UniProtKB"/>
</dbReference>
<dbReference type="GO" id="GO:0030150">
    <property type="term" value="P:protein import into mitochondrial matrix"/>
    <property type="evidence" value="ECO:0000318"/>
    <property type="project" value="GO_Central"/>
</dbReference>
<dbReference type="GO" id="GO:0045039">
    <property type="term" value="P:protein insertion into mitochondrial inner membrane"/>
    <property type="evidence" value="ECO:0000315"/>
    <property type="project" value="FlyBase"/>
</dbReference>
<dbReference type="GO" id="GO:0090399">
    <property type="term" value="P:replicative senescence"/>
    <property type="evidence" value="ECO:0000315"/>
    <property type="project" value="GO_Central"/>
</dbReference>
<dbReference type="InterPro" id="IPR018450">
    <property type="entry name" value="Romo1/Mgr2"/>
</dbReference>
<dbReference type="PANTHER" id="PTHR28525">
    <property type="entry name" value="REACTIVE OXYGEN SPECIES MODULATOR 1"/>
    <property type="match status" value="1"/>
</dbReference>
<dbReference type="PANTHER" id="PTHR28525:SF1">
    <property type="entry name" value="REACTIVE OXYGEN SPECIES MODULATOR 1"/>
    <property type="match status" value="1"/>
</dbReference>
<dbReference type="Pfam" id="PF10247">
    <property type="entry name" value="Romo1"/>
    <property type="match status" value="1"/>
</dbReference>
<dbReference type="SMART" id="SM01378">
    <property type="entry name" value="Romo1"/>
    <property type="match status" value="1"/>
</dbReference>
<proteinExistence type="evidence at protein level"/>
<feature type="initiator methionine" description="Removed" evidence="7">
    <location>
        <position position="1"/>
    </location>
</feature>
<feature type="chain" id="PRO_0000079433" description="Reactive oxygen species modulator 1">
    <location>
        <begin position="2"/>
        <end position="79"/>
    </location>
</feature>
<feature type="transmembrane region" description="Helical" evidence="1">
    <location>
        <begin position="22"/>
        <end position="44"/>
    </location>
</feature>
<feature type="region of interest" description="Sufficient for antibacterial activity">
    <location>
        <begin position="42"/>
        <end position="60"/>
    </location>
</feature>
<feature type="splice variant" id="VSP_036486" description="In isoform 2." evidence="6">
    <original>RIGMRGRELMGGIGKTMMQSGGTFGTFMAIGMGIRC</original>
    <variation>SSILVSSSGSECGVES</variation>
    <location>
        <begin position="44"/>
        <end position="79"/>
    </location>
</feature>
<feature type="sequence variant" id="VAR_014127" description="In dbSNP:rs1044521.">
    <original>A</original>
    <variation>P</variation>
    <location>
        <position position="28"/>
    </location>
</feature>
<organism>
    <name type="scientific">Homo sapiens</name>
    <name type="common">Human</name>
    <dbReference type="NCBI Taxonomy" id="9606"/>
    <lineage>
        <taxon>Eukaryota</taxon>
        <taxon>Metazoa</taxon>
        <taxon>Chordata</taxon>
        <taxon>Craniata</taxon>
        <taxon>Vertebrata</taxon>
        <taxon>Euteleostomi</taxon>
        <taxon>Mammalia</taxon>
        <taxon>Eutheria</taxon>
        <taxon>Euarchontoglires</taxon>
        <taxon>Primates</taxon>
        <taxon>Haplorrhini</taxon>
        <taxon>Catarrhini</taxon>
        <taxon>Hominidae</taxon>
        <taxon>Homo</taxon>
    </lineage>
</organism>
<evidence type="ECO:0000255" key="1"/>
<evidence type="ECO:0000269" key="2">
    <source>
    </source>
</evidence>
<evidence type="ECO:0000269" key="3">
    <source>
    </source>
</evidence>
<evidence type="ECO:0000269" key="4">
    <source>
    </source>
</evidence>
<evidence type="ECO:0000269" key="5">
    <source>
    </source>
</evidence>
<evidence type="ECO:0000305" key="6"/>
<evidence type="ECO:0007744" key="7">
    <source>
    </source>
</evidence>
<protein>
    <recommendedName>
        <fullName>Reactive oxygen species modulator 1</fullName>
        <shortName>ROS modulator 1</shortName>
    </recommendedName>
    <alternativeName>
        <fullName>Epididymis tissue protein Li 175</fullName>
    </alternativeName>
    <alternativeName>
        <fullName>Glyrichin</fullName>
    </alternativeName>
    <alternativeName>
        <fullName>Mitochondrial targeting GxxxG motif protein</fullName>
        <shortName>MTGM</shortName>
    </alternativeName>
    <alternativeName>
        <fullName>Protein MGR2 homolog</fullName>
    </alternativeName>
</protein>
<gene>
    <name type="primary">ROMO1</name>
    <name type="synonym">C20orf52</name>
</gene>
<sequence length="79" mass="8183">MPVAVGPYGQSQPSCFDRVKMGFVMGCAVGMAAGALFGTFSCLRIGMRGRELMGGIGKTMMQSGGTFGTFMAIGMGIRC</sequence>
<keyword id="KW-0025">Alternative splicing</keyword>
<keyword id="KW-0044">Antibiotic</keyword>
<keyword id="KW-0929">Antimicrobial</keyword>
<keyword id="KW-0472">Membrane</keyword>
<keyword id="KW-0496">Mitochondrion</keyword>
<keyword id="KW-0999">Mitochondrion inner membrane</keyword>
<keyword id="KW-1267">Proteomics identification</keyword>
<keyword id="KW-1185">Reference proteome</keyword>
<keyword id="KW-0812">Transmembrane</keyword>
<keyword id="KW-1133">Transmembrane helix</keyword>
<comment type="function">
    <text>Induces production of reactive oxygen species (ROS) which are necessary for cell proliferation. May play a role in inducing oxidative DNA damage and replicative senescence. May play a role in the coordination of mitochondrial morphology and cell proliferation.</text>
</comment>
<comment type="function">
    <text>Has antibacterial activity against a variety of bacteria including S.aureus, P.aeruginosa and M.tuberculosis. Acts by inducing bacterial membrane breakage.</text>
</comment>
<comment type="interaction">
    <interactant intactId="EBI-11909831">
        <id>P60602</id>
    </interactant>
    <interactant intactId="EBI-7062247">
        <id>Q9UHD4</id>
        <label>CIDEB</label>
    </interactant>
    <organismsDiffer>false</organismsDiffer>
    <experiments>3</experiments>
</comment>
<comment type="interaction">
    <interactant intactId="EBI-11909831">
        <id>P60602</id>
    </interactant>
    <interactant intactId="EBI-17589229">
        <id>Q6NTF9-3</id>
        <label>RHBDD2</label>
    </interactant>
    <organismsDiffer>false</organismsDiffer>
    <experiments>3</experiments>
</comment>
<comment type="subcellular location">
    <subcellularLocation>
        <location evidence="2 5">Mitochondrion inner membrane</location>
        <topology evidence="2 5">Single-pass membrane protein</topology>
    </subcellularLocation>
</comment>
<comment type="alternative products">
    <event type="alternative splicing"/>
    <isoform>
        <id>P60602-1</id>
        <name>1</name>
        <sequence type="displayed"/>
    </isoform>
    <isoform>
        <id>P60602-2</id>
        <name>2</name>
        <sequence type="described" ref="VSP_036486"/>
    </isoform>
</comment>
<comment type="tissue specificity">
    <text evidence="2 5">Up-regulated in a number of cancer cell lines when compared to a normal lung fibroblast cell line. Highly expressed in brain tumors.</text>
</comment>
<comment type="developmental stage">
    <text evidence="4">Expression increases in senescent cells.</text>
</comment>
<comment type="induction">
    <text evidence="3">By the anticancer drug fluorouracil (5FU).</text>
</comment>
<comment type="miscellaneous">
    <text>Enforced expression in IMR-90 cells leads to increased levels of ROS and induces premature cell senescence and nuclear DNA damage.</text>
</comment>
<comment type="similarity">
    <text evidence="6">Belongs to the MGR2 family.</text>
</comment>